<name>MOR1_BOMMO</name>
<gene>
    <name type="primary">MOR1</name>
    <name type="synonym">MOR</name>
</gene>
<protein>
    <recommendedName>
        <fullName>Moricin-1</fullName>
    </recommendedName>
</protein>
<keyword id="KW-0002">3D-structure</keyword>
<keyword id="KW-0044">Antibiotic</keyword>
<keyword id="KW-0929">Antimicrobial</keyword>
<keyword id="KW-0903">Direct protein sequencing</keyword>
<keyword id="KW-0391">Immunity</keyword>
<keyword id="KW-0399">Innate immunity</keyword>
<keyword id="KW-1185">Reference proteome</keyword>
<keyword id="KW-0964">Secreted</keyword>
<keyword id="KW-0732">Signal</keyword>
<evidence type="ECO:0000269" key="1">
    <source>
    </source>
</evidence>
<evidence type="ECO:0000269" key="2">
    <source>
    </source>
</evidence>
<evidence type="ECO:0000305" key="3"/>
<evidence type="ECO:0007829" key="4">
    <source>
        <dbReference type="PDB" id="1KV4"/>
    </source>
</evidence>
<accession>P82818</accession>
<comment type="function">
    <text evidence="2">Has antibacterial activity against Gram-positive and Gram-negative bacteria. Probably acts by disturbing membrane functions with its amphipathic structure.</text>
</comment>
<comment type="subcellular location">
    <subcellularLocation>
        <location>Secreted</location>
    </subcellularLocation>
</comment>
<comment type="tissue specificity">
    <text evidence="1">Expressed in fat body and to a lesser extent in hemocyte and Malpighian tubules.</text>
</comment>
<comment type="developmental stage">
    <text evidence="1">A weak signal appears 1 hour after induction, maximum levels are reached by 8 hours and remain at a high level over a period of at least 48 hours.</text>
</comment>
<comment type="induction">
    <text evidence="1">By bacterial infection.</text>
</comment>
<comment type="mass spectrometry" mass="4543.1" error="0.6" method="Electrospray" evidence="2"/>
<comment type="similarity">
    <text evidence="3">Belongs to the moricin family.</text>
</comment>
<reference key="1">
    <citation type="journal article" date="1999" name="Biochem. J.">
        <title>Inducible gene expression of moricin, a unique antibacterial peptide from the silkworm (Bombyx mori).</title>
        <authorList>
            <person name="Furukawa S."/>
            <person name="Tanaka H."/>
            <person name="Nakazawa H."/>
            <person name="Ishibashi J."/>
            <person name="Shono T."/>
            <person name="Yamakawa M."/>
        </authorList>
    </citation>
    <scope>NUCLEOTIDE SEQUENCE [MRNA]</scope>
    <scope>INDUCTION</scope>
    <scope>TISSUE SPECIFICITY</scope>
    <scope>DEVELOPMENTAL STAGE</scope>
    <source>
        <strain>CHU 602</strain>
        <strain>Tokai X Asahi</strain>
        <tissue>Fat body</tissue>
    </source>
</reference>
<reference key="2">
    <citation type="journal article" date="1995" name="J. Biol. Chem.">
        <title>Moricin, a novel type of antibacterial peptide isolated from the silkworm, Bombyx mori.</title>
        <authorList>
            <person name="Hara S."/>
            <person name="Yamakawa M."/>
        </authorList>
    </citation>
    <scope>PROTEIN SEQUENCE OF 25-66</scope>
    <scope>FUNCTION</scope>
    <scope>MASS SPECTROMETRY</scope>
    <source>
        <strain>Tokai X Asahi</strain>
        <tissue>Hemolymph</tissue>
    </source>
</reference>
<reference key="3">
    <citation type="journal article" date="2002" name="FEBS Lett.">
        <title>Solution structure of moricin, an antibacterial peptide, isolated from the silkworm Bombyx mori.</title>
        <authorList>
            <person name="Hemmi H."/>
            <person name="Ishibashi J."/>
            <person name="Hara S."/>
            <person name="Yamakawa M."/>
        </authorList>
    </citation>
    <scope>STRUCTURE BY NMR OF 25-66</scope>
</reference>
<organism>
    <name type="scientific">Bombyx mori</name>
    <name type="common">Silk moth</name>
    <dbReference type="NCBI Taxonomy" id="7091"/>
    <lineage>
        <taxon>Eukaryota</taxon>
        <taxon>Metazoa</taxon>
        <taxon>Ecdysozoa</taxon>
        <taxon>Arthropoda</taxon>
        <taxon>Hexapoda</taxon>
        <taxon>Insecta</taxon>
        <taxon>Pterygota</taxon>
        <taxon>Neoptera</taxon>
        <taxon>Endopterygota</taxon>
        <taxon>Lepidoptera</taxon>
        <taxon>Glossata</taxon>
        <taxon>Ditrysia</taxon>
        <taxon>Bombycoidea</taxon>
        <taxon>Bombycidae</taxon>
        <taxon>Bombycinae</taxon>
        <taxon>Bombyx</taxon>
    </lineage>
</organism>
<feature type="signal peptide" evidence="2">
    <location>
        <begin position="1"/>
        <end position="24"/>
    </location>
</feature>
<feature type="chain" id="PRO_0000004992" description="Moricin-1">
    <location>
        <begin position="25"/>
        <end position="66"/>
    </location>
</feature>
<feature type="helix" evidence="4">
    <location>
        <begin position="29"/>
        <end position="58"/>
    </location>
</feature>
<sequence length="66" mass="7163">MNILKFFFVFIVAMSLVSCSTAAPAKIPIKAIKTVGKAVGKGLRAINIASTANDVFNFLKPKKRKH</sequence>
<proteinExistence type="evidence at protein level"/>
<dbReference type="EMBL" id="AB006915">
    <property type="protein sequence ID" value="BAB13508.1"/>
    <property type="molecule type" value="mRNA"/>
</dbReference>
<dbReference type="PDB" id="1KV4">
    <property type="method" value="NMR"/>
    <property type="chains" value="A=25-66"/>
</dbReference>
<dbReference type="PDBsum" id="1KV4"/>
<dbReference type="BMRB" id="P82818"/>
<dbReference type="SMR" id="P82818"/>
<dbReference type="STRING" id="7091.P82818"/>
<dbReference type="TCDB" id="1.C.114.1.1">
    <property type="family name" value="the membrane permeabilizing peptide, moricin (moricin) family"/>
</dbReference>
<dbReference type="PaxDb" id="7091-BGIBMGA011495-TA"/>
<dbReference type="eggNOG" id="ENOG502TCRK">
    <property type="taxonomic scope" value="Eukaryota"/>
</dbReference>
<dbReference type="HOGENOM" id="CLU_206132_1_0_1"/>
<dbReference type="InParanoid" id="P82818"/>
<dbReference type="EvolutionaryTrace" id="P82818"/>
<dbReference type="Proteomes" id="UP000005204">
    <property type="component" value="Unassembled WGS sequence"/>
</dbReference>
<dbReference type="GO" id="GO:0005576">
    <property type="term" value="C:extracellular region"/>
    <property type="evidence" value="ECO:0007669"/>
    <property type="project" value="UniProtKB-SubCell"/>
</dbReference>
<dbReference type="GO" id="GO:0042742">
    <property type="term" value="P:defense response to bacterium"/>
    <property type="evidence" value="ECO:0007669"/>
    <property type="project" value="UniProtKB-KW"/>
</dbReference>
<dbReference type="GO" id="GO:0045087">
    <property type="term" value="P:innate immune response"/>
    <property type="evidence" value="ECO:0007669"/>
    <property type="project" value="UniProtKB-KW"/>
</dbReference>
<dbReference type="Gene3D" id="1.20.5.750">
    <property type="entry name" value="Moricin domain"/>
    <property type="match status" value="1"/>
</dbReference>
<dbReference type="InterPro" id="IPR009456">
    <property type="entry name" value="Moricin_fam"/>
</dbReference>
<dbReference type="InterPro" id="IPR037043">
    <property type="entry name" value="Moricin_sf"/>
</dbReference>
<dbReference type="Pfam" id="PF06451">
    <property type="entry name" value="Moricin"/>
    <property type="match status" value="1"/>
</dbReference>